<evidence type="ECO:0000250" key="1">
    <source>
        <dbReference type="UniProtKB" id="Q5CZC0"/>
    </source>
</evidence>
<evidence type="ECO:0000255" key="2"/>
<evidence type="ECO:0000256" key="3">
    <source>
        <dbReference type="SAM" id="MobiDB-lite"/>
    </source>
</evidence>
<evidence type="ECO:0000269" key="4">
    <source>
    </source>
</evidence>
<evidence type="ECO:0000269" key="5">
    <source>
    </source>
</evidence>
<evidence type="ECO:0000305" key="6"/>
<evidence type="ECO:0000305" key="7">
    <source>
    </source>
</evidence>
<evidence type="ECO:0007744" key="8">
    <source>
    </source>
</evidence>
<reference key="1">
    <citation type="journal article" date="2009" name="PLoS Biol.">
        <title>Lineage-specific biology revealed by a finished genome assembly of the mouse.</title>
        <authorList>
            <person name="Church D.M."/>
            <person name="Goodstadt L."/>
            <person name="Hillier L.W."/>
            <person name="Zody M.C."/>
            <person name="Goldstein S."/>
            <person name="She X."/>
            <person name="Bult C.J."/>
            <person name="Agarwala R."/>
            <person name="Cherry J.L."/>
            <person name="DiCuccio M."/>
            <person name="Hlavina W."/>
            <person name="Kapustin Y."/>
            <person name="Meric P."/>
            <person name="Maglott D."/>
            <person name="Birtle Z."/>
            <person name="Marques A.C."/>
            <person name="Graves T."/>
            <person name="Zhou S."/>
            <person name="Teague B."/>
            <person name="Potamousis K."/>
            <person name="Churas C."/>
            <person name="Place M."/>
            <person name="Herschleb J."/>
            <person name="Runnheim R."/>
            <person name="Forrest D."/>
            <person name="Amos-Landgraf J."/>
            <person name="Schwartz D.C."/>
            <person name="Cheng Z."/>
            <person name="Lindblad-Toh K."/>
            <person name="Eichler E.E."/>
            <person name="Ponting C.P."/>
        </authorList>
    </citation>
    <scope>NUCLEOTIDE SEQUENCE [LARGE SCALE GENOMIC DNA]</scope>
    <source>
        <strain>C57BL/6J</strain>
    </source>
</reference>
<reference key="2">
    <citation type="journal article" date="2003" name="Biol. Reprod.">
        <title>A-kinase anchoring protein 4 binding proteins in the fibrous sheath of the sperm flagellum.</title>
        <authorList>
            <person name="Brown P.R."/>
            <person name="Miki K."/>
            <person name="Harper D.B."/>
            <person name="Eddy E.M."/>
        </authorList>
    </citation>
    <scope>POSSIBLE INTERACTION WITH AKAP4</scope>
    <scope>DEVELOPMENTAL STAGE</scope>
</reference>
<reference key="3">
    <citation type="journal article" date="2010" name="Cell">
        <title>A tissue-specific atlas of mouse protein phosphorylation and expression.</title>
        <authorList>
            <person name="Huttlin E.L."/>
            <person name="Jedrychowski M.P."/>
            <person name="Elias J.E."/>
            <person name="Goswami T."/>
            <person name="Rad R."/>
            <person name="Beausoleil S.A."/>
            <person name="Villen J."/>
            <person name="Haas W."/>
            <person name="Sowa M.E."/>
            <person name="Gygi S.P."/>
        </authorList>
    </citation>
    <scope>PHOSPHORYLATION [LARGE SCALE ANALYSIS] AT SER-430</scope>
    <scope>IDENTIFICATION BY MASS SPECTROMETRY [LARGE SCALE ANALYSIS]</scope>
    <source>
        <tissue>Testis</tissue>
    </source>
</reference>
<reference key="4">
    <citation type="journal article" date="2018" name="Hum. Reprod.">
        <title>Whole-exome sequencing identifies mutations in FSIP2 as a recurrent cause of multiple morphological abnormalities of the sperm flagella.</title>
        <authorList>
            <person name="Martinez G."/>
            <person name="Kherraf Z.E."/>
            <person name="Zouari R."/>
            <person name="Fourati Ben Mustapha S."/>
            <person name="Saut A."/>
            <person name="Pernet-Gallay K."/>
            <person name="Bertrand A."/>
            <person name="Bidart M."/>
            <person name="Hograindleur J.P."/>
            <person name="Amiri-Yekta A."/>
            <person name="Kharouf M."/>
            <person name="Karaouzene T."/>
            <person name="Thierry-Mieg N."/>
            <person name="Dacheux-Deschamps D."/>
            <person name="Satre V."/>
            <person name="Bonhivers M."/>
            <person name="Toure A."/>
            <person name="Arnoult C."/>
            <person name="Ray P.F."/>
            <person name="Coutton C."/>
        </authorList>
    </citation>
    <scope>TISSUE SPECIFICITY</scope>
</reference>
<sequence>MELYLSACSKTANVAANKAASSTVAEDSQQCVDGRHKTPIPGVGAAQLLDLPLGVKLPMIPGTDTVYFTTNISEKLFRPSYGFNLSDPYCRLLETQYKSLHDPHLRTYYKRKDILRRLKKGGYITSNNKIVCSLRELNKYRQYLTSLKLDFERNYLREQQLISKQLHKLQETSQLPHCSDVTRFQNWLLQDNTHSIKDQERLLRHRYLDMISKELEQLERTAEEQRLLRIDRDERRQREYTRKKLTLRRKIEEEWKTKEMMLLTKIGEDVKREQKIEEQRRKSREESDRKKQAMLEKKMAYHLQKMQDTGLKDDIGRNGFDYRGQNGTTFESSSKKRKKQFDDIKIVYPDGDQKAYRGTSGQVSATVNQSQSSSKDVTKVSASSVTYPAEVQNSSSEQKRSEVTKRLSDERGKNSTDDSARESIISTQLSPTRNAKLSQISLDHQKEEKEMKSTWNGGLSKKSSYAGEPGSPTDAPPQGIFSFPVNSNTQQNLQHCLKDKVTSEELNSIIQNIMTWVVATVTSILYPAITKYEERVQNNTYPVTDDSDLSSDSSSFCSTCSEGFTYRNYTAKTLPVDPCTFASDMPIKKPPTPLKPPSAHVERTVIDQTYQRQGQSVPSQVNYQKTSLDYQFPKIGSSKSDSHLLTSLETCTKKSKDATTETESLEISLLYDKKAKAMDQIKNLKNVFVNFKCHLKGETQLILESIFQEIMSDLSQAIPSLSSVTAEVFVDQTETEREELLSNVDICSVASEIVENMLEKLESAVEKRCVQMFSQEDLSVDIKPSLSTSGDYLSSVETKPSEETLSYTLEPMCDVADDMVHAILEKLMILASYKKNDVPPEDTTKHFQQTKTEPIHKVHQQTEQKKASFASDPANQIVKEEIQSLISSIFSQSSLVGYVEEAISTILGYVQTELNNERLIASEETVVLLQLLDDVLTQLHQQPVKAGVKKPRRPRVRNLSDPEEKYRVTGTRPFNNLKSKRPFPPVNVPGMVLYSEDDDEEIDNFVQSVLDSSFNDEKSSSQEQVPNYWPKKRDTYFESKRSNKLPTKSTFQNKVGSHDWGLKLELSLSSEDIVKTKHCLGQEPSIFSQDQKHQIQKASENIVKHILTDMLKDMSSDSSSHLGSQTGKGASAFISEKSQGLSDQEWMEQMFSVSEICAFAHEITDSVINILHKASMHIPNTIKNAFTSVHPTHVAPFDTAHTSKETPSKMPFKVWFDSEKKMKYLSSLNMEHEKTSQLRSGKCEPKRVNDITDKITNTIFKRLKLFVCPKLQIGNKSSLIEKSLHSQLSTYTMKIVNIILHAIQSELEINKTKPNLKETDHPKCHKNKGWFTDPNKVVESRVTSVNDDIMESPLLTCICEMISSTNEDKKNTSTYTDKTLSTSICESGNFHKQSILSNKQDKNSFCQLLAKPCLQHSLADEKDFKVSSKLEVLDQIGDTLHEMLGKLTGDHPDPQPSCSHQNTETIDKDPPTMSNTQLISKAILENVLAKLCDVDIDTSIVNSGPKTVPESLDIDNLSFASTMEEMAKCTNIISNIISKIMKDNKEVTKSKAKNDLPTSSKTEIPKEMCPQNLKNIASDILNMVFAKLEHFASGSVVNVGNLNDENKKEHTVDWECESNSSPADSHDKSLQSTLYSHAKKVSNGILKAIQTELNMNPPDCKTDKKRSPEETQILTNIVDLILDVVSSDMFAEPESENQSNENYGYRPTYGNFLPGGAESDSFLDDDTQNKELIRDATSFNEETRTLSTDQMGLERTLSKIEVKLKEPHRSPIVPIIRNILNEIFQSALINQLNVFSLSRAHFSGMPQNAPTSSTQTSAHFMDQMMGPLVSDTDVSIVVNDVVRTVFHKLYSAAMTERHVSENRGKTIILSANVSFRECTYGGNAPVSGLNENVCDLQSSWNVDKQIKINVVEDIVQAILGNLETFAASKVESLFCPQVKFTVPVTLPVMQEEGSLSQALSGKDSYSDNQLPCLVDHGNPEQMDSWYQMSLSKLNIYAKDVARKILQGIKHELDKEQESPLLTNNIVVSENIASQVVNKVLDIVSCKSKCDKKSSDKDHYSEQQVGIIEQLVNKREYRKILEFQIQDTIEGILCDIYENILYQNNLSFATPTLKYGIPAKHSEANFEQVVMGTNIIPKVSVPKADVILVSKDIVDIVLHNLTSLVVLAINAKDSAPARVAIYDIFPKPQFQQPLSITQRTEETPGHFSHSKNKNLGSPDVYQVPVNGKEDTKELAPDPCKENANRITQPIFNRLQSFATERINSLMTPAFQSKGNVFVSPQFEIGKDDNCIFHEPGQAESDVDVLKLTTRTVTSQELVEPIFTSCRENFGTTPHLSQTNLKDYAAFIASTILKLIKNDLDLEVQSMHTYSSHILFQKNMIVSEIVNNILKILPNKEPIKEFFLSSPENSSCSQLTISSEDLVGYKEKEKATALPQFTNDSLEENQVTVEKESQRDVLEEIFMRKGESKPREKTEILRTVEEVLKKLSQKIMEIIGHVAPFNESPHTVSKSKSKTAAATQKKFFQSRINNVSNDILENVLSEMHSVVVTSLYRNNKSKREGEMHDSSDSSSVKPSGSRETKPTRKRSSPLRLGVPQMHPHADNLNALVLENTILPYSPLQIGKYLVQIVLENLSNFVSLHLEEGYPPEGSYDDLYLLRLHNAKLSPKNSPRPGGKASLKMRSKINSLSKFKTKPHLGISSTKTKIKNKLSAGEKTPRESRSKTALGLPQTPQVEDTKTTLKTKLPVAELRLYATNIITDILQVILSSLERAAQHRAMFNTKVLASSQILEASKIVNAVLQELYATNNDNLASPINISSLSDRRLSKQNLGAGYPTEQPCFYLENVSSQLEQIFPKEGILKKMFDKWQTETSDTETEKSKLLTIAENILTEISIKAKDLEYSLSLLNLPPLEECENRLYDRFKGVSTRAEDTNAQINMFGREIVEMLFEKLQLCFLSQMPTQDSNGILTSRKEHGTSKSKHGVPTKPILGGIQTYNSKMADQVSMSPSNQIVHEIVERVLHMLESFVDLKFKHISKYEFSEIVKMPIDNLFQAQQRQLSKKMLPKLPFRKFGDESKPGTIISKDDGQNTLLQVHLFHSELLTYSVTAVSGMLRIIKNKLDKEISQMEPSPVSILKENITASEIIGTLIDQCSHFEESLIKNLPTKHWFQGTENVYIVNQVEFATPVKMPPSNTSDTPRTRRSSQGSVSGMGFSSEDDMKEKYSVTSNSSSHISSCVENTNKSLEPMGRSNSEAMPSGSRHKAHDHGQRKPNFTPFEQVTKTHNFLPQGSVLQKLFKKVNDSTEESLKQVLSFIETGKRENPRVFHYETTKSAEPNEIKTTAPPLKICLAAENIVNTVLSSYGFPHQPNTNESTETMKPFFMSRQIPLSEVCEGQKDTEKTLLKTWYSRKALIQEEESEGLEACQEDFSLLHKWKNKKPQMTTETVEETKTIVFADHELGPNEMHLVARHVTTSVITHLKNFKTGVSTEKFSHVSSLSKKIDDANQPLISIYSNSSVCQFCEHLSDAVICYLFLNISDGIKKCSREKAWEIQDAIIDKNVIIHSQLYKTRSISIGDLALSIFEVIVEVLANRNMINADKAHQASIKAKYMFCPGVTSSDFDDIFQDLLKEVIFVLSKILGINHFENNVRNKSYPTLKNNLPVFNKVNTIENQIGPRKLESSPPLTDQLAQKNKLNYLARRLNSLVGSLRSRESKEVVNEVFNIVLDLFLPDEIPDGDLSSGKLAKTFSSSNNQPSNRSLANNVGLSPKSIFLLNIVCEKLIRTLLEKCMGGTPFFEDSSLFREIPEECQHVKVLPSVQGGGFDYREAPMDCEQFQGDYMSELLENLADVDQDLLSSDCILNVISHSLVKSLMDKLSHGLQQAPFENKYRNYRTREMQPFITKAKRQELIEPEETKGHVGFMSYDNNFLTKSLNNTNANSFKKHTQFGKKHAGKSISLSFSDGKESRGINTACFHKLCQRGVNGGVFSATFLEEIISELFYNLSTSLWKKNPNITEAWLNEINTLLINNVVKKLNDAEITVLRYPEERLYFPSAHKGCIAKIVDSIYYDVLQQYEFTVTCGGNLPYDNTPVAKRISNSILLEVIDYQLPSCFKGKLRSNLYHTLNAEIILYKLHNSLKNFNSEPMTSKDYSTMLPHSFLEYVIRRVLAQLISLPIKSSSLEKKYLASSDFNEMSNCITNKVMSAISKHKIWLTIYDNQCLYTDKNLQKMVDSVYSNILQMSSSVDSIQKNIISRSPIMIDQIASFIIQEIIENHLQPFLCGERLPRPKTPLDEVSYMVKQVLSDVVESHKSQKPSPFGIYPDKLVGETVTRVLSKIFSPNTNINVELENVTQKIVSSVHKHLDKAKIPILCHKQPPFPFSNTDIVDELVTSVYKNVLKQHGLDPDIDESVNGEVFVENITKLITAAISDYLLHPLFSGDLPAASCSNSVTDHTVYDILGDINKSSKPNQTLPLYNTLLPYTFLEDMIRVLLSKFFPSAPKIDSYKAASKDKEGVNFNEIASNLISDIRRKISQHEIRFSKDEDKTKSFYSENDVQHLVDAVFMNILENYGSPESVEQNITKSNDVFIDQIAGFIIKYICEHHLQPFLERKQLSTSSYKYSDDDRQDLLYGSAYSSTFLEDVVSGVVSKIFHRVIGIVQVNSTINSENILFDKAENLIYWITEEFSKAQVTTIENAEERLSLSPVEGNILQKIIDTVYSKILEEHEMEIMPNKDFLNDTKALASQITEIILSEISYFQIPPDLVANLPLRLHSKLSQNVLVNKVHYDISKSRFRRQASTMYTTMLSHVHLEKIVTQLMSQINPSDSSVGHSDTYQSELSNTVVKLINEIMSIISKHAICIVKHGNEKQSMISEKEMQSMVDSIYADLSHSNLYQSLTKDKKGLSSIPVSKIANFIIKEIFNHHLESFLSGDKSILSASVAQTCKKKATTSTKQRELSFIVNSAVFLEEVITELLCKILQTFIQNSLSMETPERAIAEIMDIVTTLVKSIVFEFTSSEILVAEHLDESLWFSETYKEMVQKTVNSVYGNIFYEYKSLTQLHRAVQYDTSGFGGKMYHFLLEEMYDYQVQSLVSGELMPSCYASPQSANIIKNVLNVILKDTNALPSCITVLPCSLIENMIYKLLENIFPSDDTTNELKKEEKEEAGPDDVDEFMAAASKLTDEIIQEISEHEIRFANAEDTASMIYETTENFIDSVCNNILKNSEFQAEVQKDAHKKGGSFLSKIAGSIIKEIMDHYLQLFLYGEGSHSSKLPHFGGASVVAKSGKEKAPSSLFSAAFLEDVIVDLAHKFCSFLTLTDDARKKDLPEAEIVSLAIKFANSLIRDFRKSGIKVLPHAEEIFSFPPIAKETIDEISNFVYDQFIGKLGADGIQKDGTGNMVIEMVSSLAQKAISTFKIQPLFSGDWCSTFFSFLDAENISQRVQLLPKETSMQISGALKQNQLALSKITSIKKDDTQDPILNSIATIMKSNIINLLSGPSAGVTDAKKEDESKVKPATRETTSPPTSPPATMKSQGSQVQQLATSPPTSMKSQRIQVQQSVMSPPTTMKGKGAQVQQFATSPPTSMKSQGSQVQQSAMSPPTTMKSRGAQVQESVTSPFTTKESRGAQVQQSAMSPPPSMKDRGAQVQESSTSPPTTMKSRGAQVQHLSSKYKGNETGKENLVLVNEQGQILEIFTHFAVAKTVENSPEKEVFISDLKIQNEKKLDVSKSSVKTDDRPMSKDKETMTEKTVLIPQQPVKEERKQSVVKTDTEEEQYSENECVENVIENIYDNVFIVSSQEPLDFSRPIYSRSLTSDKALVILKDSAQLVPAKDLSSSGHRDIAAKEKASKETETKIRRDRSETKRSKEMKSKSSMTDHPKPSESKSKIVPAKFLEDVIAELVNKLVFTFISDKTTDTNEQKPGELYDTAMRLVNSMTKELSDAEIKVFRPEKEDEVQAAKEPAPTSPPEVKETVTKEPSPSTNIKNEDQMSDVQKTPEQSSPDKLPALEKIPSIEKSIVNKIVHSCVCNIFKECKSQESICENINSNGENLAKRLTSTVINEIFQHQLNLIFSDEVPASACVPLESKDVEQKVQNVVQTVSKECQTASPYTVQLPYKFLEDVTSGLLAKVFSKLSNVKTKLTPENVLTQLDFLQSNLVKTIAAEISKNEDLIIQYVESLHPNDDEVIQLVVQTIYNNLLPQFGSQEILQKCIISGCKLLSKTIVDLVLREVTGNQLQNYFGGELTPIQCAEVDNVVENILTNVVLTTPSQPSGPRKLSYNIIETIAVKFLSKLLSVFPKGHPERTKSQETEMRKITSKILHSIQEFISKSKIKVVQPVKESEAVPSADKAAIEKVVNSVYTNLLKHCGSPTSAFEDLMRKSDVISDIIGFSMVKEISNSEFQPQAEEELSSSELALEAVKIMEKVVKIIDELKSQEKPASITDVMLDSRVLEEALALFLAKLVKTPGPASKDTTSLTKPELNKIASQLTKSVTAEISKSNISLVESNHEEQSLDPENIEVISQVVESVYSNVVKQSGTENELSDIKGTKKAFPKKVASLIVDGVSSVPSCRVITESSYTAAHGDLDTNRIIEKAQKHAALMSSDSDKDSKKELEDEFPVRIVPHVRNKPLRIDPNIVSDHLAVISMKTQPLETLQMDCLKRTGCSIAELRRNSIRGIGPSSTDVSEMGTRQKERRISLDRTGRLDVKPLEAVGRNSFQNVRRPDITRVELLKDINNKTDLIIRLVAHDIGRKESDSSLSEGMVSDEEEVVLGEVVGDQCLRKISGGRVQQVKKSAESHVVSSKTATSTSNLKRFLALSKCCQPTSGENIESIEESGIQIMDPNKAYVKRAAAELDMPSCKSLAEETTSRDKLQYKEEEILASEPTHYFIHRIMSTSSYNQEDLISGEAEEFLPDAKANALEESCQEPQEGNSNSLEFVTIYKGSKHIAGSARLSKEHVSEMPRSSISKQGSRVLAKVSSTLSKVFSRSSGSIPKSSSPPHQDKR</sequence>
<proteinExistence type="evidence at protein level"/>
<accession>A2ARZ3</accession>
<accession>A2ARZ1</accession>
<comment type="function">
    <text evidence="1">Plays a role in spermatogenesis.</text>
</comment>
<comment type="subunit">
    <text evidence="7">May interact with AKAP4.</text>
</comment>
<comment type="tissue specificity">
    <text evidence="5">Predominantly expressed in testis.</text>
</comment>
<comment type="developmental stage">
    <text evidence="4">First detected in testis of 16 day old mice.</text>
</comment>
<comment type="sequence caution" evidence="6">
    <conflict type="erroneous gene model prediction">
        <sequence resource="EMBL-CDS" id="CAM17862"/>
    </conflict>
</comment>
<comment type="sequence caution" evidence="6">
    <conflict type="erroneous gene model prediction">
        <sequence resource="EMBL-CDS" id="CAM17864"/>
    </conflict>
</comment>
<dbReference type="EMBL" id="AL845500">
    <property type="protein sequence ID" value="CAM17864.1"/>
    <property type="status" value="ALT_SEQ"/>
    <property type="molecule type" value="Genomic_DNA"/>
</dbReference>
<dbReference type="EMBL" id="AL845500">
    <property type="protein sequence ID" value="CAM17862.3"/>
    <property type="status" value="ALT_SEQ"/>
    <property type="molecule type" value="Genomic_DNA"/>
</dbReference>
<dbReference type="SMR" id="A2ARZ3"/>
<dbReference type="FunCoup" id="A2ARZ3">
    <property type="interactions" value="30"/>
</dbReference>
<dbReference type="STRING" id="10090.ENSMUSP00000120314"/>
<dbReference type="GlyGen" id="A2ARZ3">
    <property type="glycosylation" value="7 sites, 1 O-linked glycan (7 sites)"/>
</dbReference>
<dbReference type="iPTMnet" id="A2ARZ3"/>
<dbReference type="PhosphoSitePlus" id="A2ARZ3"/>
<dbReference type="jPOST" id="A2ARZ3"/>
<dbReference type="PaxDb" id="10090-ENSMUSP00000120314"/>
<dbReference type="PeptideAtlas" id="A2ARZ3"/>
<dbReference type="ProteomicsDB" id="266873"/>
<dbReference type="Antibodypedia" id="51870">
    <property type="antibodies" value="34 antibodies from 10 providers"/>
</dbReference>
<dbReference type="Ensembl" id="ENSMUST00000143764.9">
    <property type="protein sequence ID" value="ENSMUSP00000120314.3"/>
    <property type="gene ID" value="ENSMUSG00000075249.13"/>
</dbReference>
<dbReference type="AGR" id="MGI:2664111"/>
<dbReference type="MGI" id="MGI:2664111">
    <property type="gene designation" value="Fsip2"/>
</dbReference>
<dbReference type="VEuPathDB" id="HostDB:ENSMUSG00000075249"/>
<dbReference type="eggNOG" id="ENOG502S41A">
    <property type="taxonomic scope" value="Eukaryota"/>
</dbReference>
<dbReference type="GeneTree" id="ENSGT00680000100018"/>
<dbReference type="HOGENOM" id="CLU_000048_0_0_1"/>
<dbReference type="InParanoid" id="A2ARZ3"/>
<dbReference type="OMA" id="RKTECFS"/>
<dbReference type="OrthoDB" id="8197715at2759"/>
<dbReference type="PhylomeDB" id="A2ARZ3"/>
<dbReference type="TreeFam" id="TF342086"/>
<dbReference type="PRO" id="PR:A2ARZ3"/>
<dbReference type="Proteomes" id="UP000000589">
    <property type="component" value="Chromosome 2"/>
</dbReference>
<dbReference type="RNAct" id="A2ARZ3">
    <property type="molecule type" value="protein"/>
</dbReference>
<dbReference type="Bgee" id="ENSMUSG00000075249">
    <property type="expression patterns" value="Expressed in spermatid and 3 other cell types or tissues"/>
</dbReference>
<dbReference type="ExpressionAtlas" id="A2ARZ3">
    <property type="expression patterns" value="baseline and differential"/>
</dbReference>
<dbReference type="GO" id="GO:0005739">
    <property type="term" value="C:mitochondrion"/>
    <property type="evidence" value="ECO:0007005"/>
    <property type="project" value="MGI"/>
</dbReference>
<dbReference type="GO" id="GO:0031514">
    <property type="term" value="C:motile cilium"/>
    <property type="evidence" value="ECO:0000305"/>
    <property type="project" value="MGI"/>
</dbReference>
<dbReference type="GO" id="GO:0097229">
    <property type="term" value="C:sperm end piece"/>
    <property type="evidence" value="ECO:0007669"/>
    <property type="project" value="Ensembl"/>
</dbReference>
<dbReference type="GO" id="GO:0120212">
    <property type="term" value="C:sperm head-tail coupling apparatus"/>
    <property type="evidence" value="ECO:0007669"/>
    <property type="project" value="Ensembl"/>
</dbReference>
<dbReference type="GO" id="GO:0097225">
    <property type="term" value="C:sperm midpiece"/>
    <property type="evidence" value="ECO:0007669"/>
    <property type="project" value="Ensembl"/>
</dbReference>
<dbReference type="GO" id="GO:0097228">
    <property type="term" value="C:sperm principal piece"/>
    <property type="evidence" value="ECO:0007669"/>
    <property type="project" value="Ensembl"/>
</dbReference>
<dbReference type="GO" id="GO:0061512">
    <property type="term" value="P:protein localization to cilium"/>
    <property type="evidence" value="ECO:0007669"/>
    <property type="project" value="Ensembl"/>
</dbReference>
<dbReference type="GO" id="GO:0007288">
    <property type="term" value="P:sperm axoneme assembly"/>
    <property type="evidence" value="ECO:0007669"/>
    <property type="project" value="Ensembl"/>
</dbReference>
<dbReference type="InterPro" id="IPR038891">
    <property type="entry name" value="FSIP2"/>
</dbReference>
<dbReference type="InterPro" id="IPR031554">
    <property type="entry name" value="FSIP2_C"/>
</dbReference>
<dbReference type="PANTHER" id="PTHR21856">
    <property type="entry name" value="FIBROUS SHEATH-INTERACTING PROTEIN 2"/>
    <property type="match status" value="1"/>
</dbReference>
<dbReference type="PANTHER" id="PTHR21856:SF7">
    <property type="entry name" value="FIBROUS SHEATH-INTERACTING PROTEIN 2"/>
    <property type="match status" value="1"/>
</dbReference>
<dbReference type="Pfam" id="PF15783">
    <property type="entry name" value="FSIP2"/>
    <property type="match status" value="5"/>
</dbReference>
<feature type="chain" id="PRO_0000353212" description="Fibrous sheath-interacting protein 2">
    <location>
        <begin position="1"/>
        <end position="6995"/>
    </location>
</feature>
<feature type="region of interest" description="Disordered" evidence="3">
    <location>
        <begin position="273"/>
        <end position="292"/>
    </location>
</feature>
<feature type="region of interest" description="Disordered" evidence="3">
    <location>
        <begin position="308"/>
        <end position="336"/>
    </location>
</feature>
<feature type="region of interest" description="Disordered" evidence="3">
    <location>
        <begin position="351"/>
        <end position="476"/>
    </location>
</feature>
<feature type="region of interest" description="Disordered" evidence="3">
    <location>
        <begin position="1452"/>
        <end position="1472"/>
    </location>
</feature>
<feature type="region of interest" description="Disordered" evidence="3">
    <location>
        <begin position="2554"/>
        <end position="2595"/>
    </location>
</feature>
<feature type="region of interest" description="Disordered" evidence="3">
    <location>
        <begin position="2699"/>
        <end position="2731"/>
    </location>
</feature>
<feature type="region of interest" description="Disordered" evidence="3">
    <location>
        <begin position="3182"/>
        <end position="3270"/>
    </location>
</feature>
<feature type="region of interest" description="Disordered" evidence="3">
    <location>
        <begin position="5489"/>
        <end position="5665"/>
    </location>
</feature>
<feature type="region of interest" description="Disordered" evidence="3">
    <location>
        <begin position="5719"/>
        <end position="5740"/>
    </location>
</feature>
<feature type="region of interest" description="Disordered" evidence="3">
    <location>
        <begin position="5823"/>
        <end position="5878"/>
    </location>
</feature>
<feature type="region of interest" description="Disordered" evidence="3">
    <location>
        <begin position="5943"/>
        <end position="5996"/>
    </location>
</feature>
<feature type="region of interest" description="Disordered" evidence="3">
    <location>
        <begin position="6973"/>
        <end position="6995"/>
    </location>
</feature>
<feature type="coiled-coil region" evidence="2">
    <location>
        <begin position="665"/>
        <end position="692"/>
    </location>
</feature>
<feature type="compositionally biased region" description="Polar residues" evidence="3">
    <location>
        <begin position="359"/>
        <end position="396"/>
    </location>
</feature>
<feature type="compositionally biased region" description="Basic and acidic residues" evidence="3">
    <location>
        <begin position="397"/>
        <end position="421"/>
    </location>
</feature>
<feature type="compositionally biased region" description="Polar residues" evidence="3">
    <location>
        <begin position="424"/>
        <end position="442"/>
    </location>
</feature>
<feature type="compositionally biased region" description="Basic and acidic residues" evidence="3">
    <location>
        <begin position="443"/>
        <end position="452"/>
    </location>
</feature>
<feature type="compositionally biased region" description="Polar residues" evidence="3">
    <location>
        <begin position="453"/>
        <end position="463"/>
    </location>
</feature>
<feature type="compositionally biased region" description="Basic and acidic residues" evidence="3">
    <location>
        <begin position="2555"/>
        <end position="2565"/>
    </location>
</feature>
<feature type="compositionally biased region" description="Polar residues" evidence="3">
    <location>
        <begin position="3187"/>
        <end position="3204"/>
    </location>
</feature>
<feature type="compositionally biased region" description="Low complexity" evidence="3">
    <location>
        <begin position="3220"/>
        <end position="3231"/>
    </location>
</feature>
<feature type="compositionally biased region" description="Polar residues" evidence="3">
    <location>
        <begin position="3232"/>
        <end position="3250"/>
    </location>
</feature>
<feature type="compositionally biased region" description="Basic residues" evidence="3">
    <location>
        <begin position="3255"/>
        <end position="3265"/>
    </location>
</feature>
<feature type="compositionally biased region" description="Basic and acidic residues" evidence="3">
    <location>
        <begin position="5496"/>
        <end position="5509"/>
    </location>
</feature>
<feature type="compositionally biased region" description="Polar residues" evidence="3">
    <location>
        <begin position="5523"/>
        <end position="5557"/>
    </location>
</feature>
<feature type="compositionally biased region" description="Polar residues" evidence="3">
    <location>
        <begin position="5565"/>
        <end position="5625"/>
    </location>
</feature>
<feature type="compositionally biased region" description="Polar residues" evidence="3">
    <location>
        <begin position="5638"/>
        <end position="5650"/>
    </location>
</feature>
<feature type="compositionally biased region" description="Basic and acidic residues" evidence="3">
    <location>
        <begin position="5719"/>
        <end position="5738"/>
    </location>
</feature>
<feature type="compositionally biased region" description="Basic and acidic residues" evidence="3">
    <location>
        <begin position="5829"/>
        <end position="5877"/>
    </location>
</feature>
<feature type="compositionally biased region" description="Polar residues" evidence="3">
    <location>
        <begin position="5982"/>
        <end position="5993"/>
    </location>
</feature>
<feature type="compositionally biased region" description="Low complexity" evidence="3">
    <location>
        <begin position="6977"/>
        <end position="6995"/>
    </location>
</feature>
<feature type="modified residue" description="Phosphoserine" evidence="8">
    <location>
        <position position="430"/>
    </location>
</feature>
<keyword id="KW-0175">Coiled coil</keyword>
<keyword id="KW-0597">Phosphoprotein</keyword>
<keyword id="KW-1185">Reference proteome</keyword>
<keyword id="KW-0677">Repeat</keyword>
<name>FSIP2_MOUSE</name>
<protein>
    <recommendedName>
        <fullName>Fibrous sheath-interacting protein 2</fullName>
    </recommendedName>
</protein>
<gene>
    <name type="primary">Fsip2</name>
</gene>
<organism>
    <name type="scientific">Mus musculus</name>
    <name type="common">Mouse</name>
    <dbReference type="NCBI Taxonomy" id="10090"/>
    <lineage>
        <taxon>Eukaryota</taxon>
        <taxon>Metazoa</taxon>
        <taxon>Chordata</taxon>
        <taxon>Craniata</taxon>
        <taxon>Vertebrata</taxon>
        <taxon>Euteleostomi</taxon>
        <taxon>Mammalia</taxon>
        <taxon>Eutheria</taxon>
        <taxon>Euarchontoglires</taxon>
        <taxon>Glires</taxon>
        <taxon>Rodentia</taxon>
        <taxon>Myomorpha</taxon>
        <taxon>Muroidea</taxon>
        <taxon>Muridae</taxon>
        <taxon>Murinae</taxon>
        <taxon>Mus</taxon>
        <taxon>Mus</taxon>
    </lineage>
</organism>